<organism>
    <name type="scientific">Klebsiella pneumoniae subsp. pneumoniae (strain ATCC 700721 / MGH 78578)</name>
    <dbReference type="NCBI Taxonomy" id="272620"/>
    <lineage>
        <taxon>Bacteria</taxon>
        <taxon>Pseudomonadati</taxon>
        <taxon>Pseudomonadota</taxon>
        <taxon>Gammaproteobacteria</taxon>
        <taxon>Enterobacterales</taxon>
        <taxon>Enterobacteriaceae</taxon>
        <taxon>Klebsiella/Raoultella group</taxon>
        <taxon>Klebsiella</taxon>
        <taxon>Klebsiella pneumoniae complex</taxon>
    </lineage>
</organism>
<dbReference type="EC" id="2.6.1.37" evidence="1"/>
<dbReference type="EMBL" id="CP000647">
    <property type="protein sequence ID" value="ABR79446.1"/>
    <property type="molecule type" value="Genomic_DNA"/>
</dbReference>
<dbReference type="RefSeq" id="WP_004181579.1">
    <property type="nucleotide sequence ID" value="NC_009648.1"/>
</dbReference>
<dbReference type="SMR" id="A6TFW2"/>
<dbReference type="STRING" id="272620.KPN_04063"/>
<dbReference type="PaxDb" id="272620-KPN_04063"/>
<dbReference type="EnsemblBacteria" id="ABR79446">
    <property type="protein sequence ID" value="ABR79446"/>
    <property type="gene ID" value="KPN_04063"/>
</dbReference>
<dbReference type="KEGG" id="kpn:KPN_04063"/>
<dbReference type="HOGENOM" id="CLU_027686_3_1_6"/>
<dbReference type="Proteomes" id="UP000000265">
    <property type="component" value="Chromosome"/>
</dbReference>
<dbReference type="GO" id="GO:0047304">
    <property type="term" value="F:2-aminoethylphosphonate-pyruvate transaminase activity"/>
    <property type="evidence" value="ECO:0007669"/>
    <property type="project" value="UniProtKB-UniRule"/>
</dbReference>
<dbReference type="GO" id="GO:0019700">
    <property type="term" value="P:organic phosphonate catabolic process"/>
    <property type="evidence" value="ECO:0007669"/>
    <property type="project" value="InterPro"/>
</dbReference>
<dbReference type="Gene3D" id="3.90.1150.10">
    <property type="entry name" value="Aspartate Aminotransferase, domain 1"/>
    <property type="match status" value="1"/>
</dbReference>
<dbReference type="Gene3D" id="3.40.640.10">
    <property type="entry name" value="Type I PLP-dependent aspartate aminotransferase-like (Major domain)"/>
    <property type="match status" value="1"/>
</dbReference>
<dbReference type="HAMAP" id="MF_01376">
    <property type="entry name" value="PhnW_aminotrans_5"/>
    <property type="match status" value="1"/>
</dbReference>
<dbReference type="InterPro" id="IPR000192">
    <property type="entry name" value="Aminotrans_V_dom"/>
</dbReference>
<dbReference type="InterPro" id="IPR012703">
    <property type="entry name" value="NH2EtPonate_pyrv_transaminase"/>
</dbReference>
<dbReference type="InterPro" id="IPR015424">
    <property type="entry name" value="PyrdxlP-dep_Trfase"/>
</dbReference>
<dbReference type="InterPro" id="IPR015421">
    <property type="entry name" value="PyrdxlP-dep_Trfase_major"/>
</dbReference>
<dbReference type="InterPro" id="IPR015422">
    <property type="entry name" value="PyrdxlP-dep_Trfase_small"/>
</dbReference>
<dbReference type="InterPro" id="IPR024169">
    <property type="entry name" value="SP_NH2Trfase/AEP_transaminase"/>
</dbReference>
<dbReference type="NCBIfam" id="TIGR03301">
    <property type="entry name" value="PhnW-AepZ"/>
    <property type="match status" value="1"/>
</dbReference>
<dbReference type="NCBIfam" id="NF010006">
    <property type="entry name" value="PRK13479.1"/>
    <property type="match status" value="1"/>
</dbReference>
<dbReference type="NCBIfam" id="TIGR02326">
    <property type="entry name" value="transamin_PhnW"/>
    <property type="match status" value="1"/>
</dbReference>
<dbReference type="PANTHER" id="PTHR42778">
    <property type="entry name" value="2-AMINOETHYLPHOSPHONATE--PYRUVATE TRANSAMINASE"/>
    <property type="match status" value="1"/>
</dbReference>
<dbReference type="PANTHER" id="PTHR42778:SF1">
    <property type="entry name" value="2-AMINOETHYLPHOSPHONATE--PYRUVATE TRANSAMINASE"/>
    <property type="match status" value="1"/>
</dbReference>
<dbReference type="Pfam" id="PF00266">
    <property type="entry name" value="Aminotran_5"/>
    <property type="match status" value="1"/>
</dbReference>
<dbReference type="PIRSF" id="PIRSF000524">
    <property type="entry name" value="SPT"/>
    <property type="match status" value="1"/>
</dbReference>
<dbReference type="SUPFAM" id="SSF53383">
    <property type="entry name" value="PLP-dependent transferases"/>
    <property type="match status" value="1"/>
</dbReference>
<protein>
    <recommendedName>
        <fullName evidence="1">2-aminoethylphosphonate--pyruvate transaminase</fullName>
        <ecNumber evidence="1">2.6.1.37</ecNumber>
    </recommendedName>
    <alternativeName>
        <fullName evidence="1">2-aminoethylphosphonate aminotransferase</fullName>
    </alternativeName>
    <alternativeName>
        <fullName evidence="1">AEP transaminase</fullName>
        <shortName evidence="1">AEPT</shortName>
    </alternativeName>
</protein>
<sequence>MTSRNYLLLTPGPLTTSRTVKEAMLFDSCTWDDDYNLGVVQTIRQQLVQLATPADGYTAVLLQGSGSYAVEAVLGSVIGEQGKVLIVSNGAYGARMIEMAQLMGIACHPYDCGEVSRPDAAAIEQILQNDPAITHIAMVHSETTTGMLNPIEEVAELAKRYDKRYIVDAMSSFGGIPLDIAALNIDYLISSANKCIQGVPGFAFVIAREAELAACKGRSRSLSLDLYAQWRCMEDNHGKWRFTSPTHTVLAFAQALKELAQEGGVSARHQRYRNNQRRLVAGMRALGFRPLLDDSLHSPIITAFYSPDAPQYRFHTFYQKLKDQGFVIYPGKVSQSDCFRIGNIGEVYDADITALLAAIDNAMYWKQ</sequence>
<comment type="function">
    <text evidence="1">Involved in phosphonate degradation.</text>
</comment>
<comment type="catalytic activity">
    <reaction evidence="1">
        <text>(2-aminoethyl)phosphonate + pyruvate = phosphonoacetaldehyde + L-alanine</text>
        <dbReference type="Rhea" id="RHEA:17021"/>
        <dbReference type="ChEBI" id="CHEBI:15361"/>
        <dbReference type="ChEBI" id="CHEBI:57418"/>
        <dbReference type="ChEBI" id="CHEBI:57972"/>
        <dbReference type="ChEBI" id="CHEBI:58383"/>
        <dbReference type="EC" id="2.6.1.37"/>
    </reaction>
</comment>
<comment type="cofactor">
    <cofactor evidence="1">
        <name>pyridoxal 5'-phosphate</name>
        <dbReference type="ChEBI" id="CHEBI:597326"/>
    </cofactor>
</comment>
<comment type="subunit">
    <text evidence="1">Homodimer.</text>
</comment>
<comment type="similarity">
    <text evidence="1">Belongs to the class-V pyridoxal-phosphate-dependent aminotransferase family. PhnW subfamily.</text>
</comment>
<accession>A6TFW2</accession>
<gene>
    <name evidence="1" type="primary">phnW</name>
    <name type="ordered locus">KPN78578_40220</name>
    <name type="ORF">KPN_04063</name>
</gene>
<keyword id="KW-0032">Aminotransferase</keyword>
<keyword id="KW-0663">Pyridoxal phosphate</keyword>
<keyword id="KW-0670">Pyruvate</keyword>
<keyword id="KW-0808">Transferase</keyword>
<name>PHNW_KLEP7</name>
<reference key="1">
    <citation type="submission" date="2006-09" db="EMBL/GenBank/DDBJ databases">
        <authorList>
            <consortium name="The Klebsiella pneumonia Genome Sequencing Project"/>
            <person name="McClelland M."/>
            <person name="Sanderson E.K."/>
            <person name="Spieth J."/>
            <person name="Clifton W.S."/>
            <person name="Latreille P."/>
            <person name="Sabo A."/>
            <person name="Pepin K."/>
            <person name="Bhonagiri V."/>
            <person name="Porwollik S."/>
            <person name="Ali J."/>
            <person name="Wilson R.K."/>
        </authorList>
    </citation>
    <scope>NUCLEOTIDE SEQUENCE [LARGE SCALE GENOMIC DNA]</scope>
    <source>
        <strain>ATCC 700721 / MGH 78578</strain>
    </source>
</reference>
<feature type="chain" id="PRO_1000068248" description="2-aminoethylphosphonate--pyruvate transaminase">
    <location>
        <begin position="1"/>
        <end position="367"/>
    </location>
</feature>
<feature type="modified residue" description="N6-(pyridoxal phosphate)lysine" evidence="1">
    <location>
        <position position="194"/>
    </location>
</feature>
<evidence type="ECO:0000255" key="1">
    <source>
        <dbReference type="HAMAP-Rule" id="MF_01376"/>
    </source>
</evidence>
<proteinExistence type="inferred from homology"/>